<organism>
    <name type="scientific">Streptococcus thermophilus (strain ATCC BAA-250 / LMG 18311)</name>
    <dbReference type="NCBI Taxonomy" id="264199"/>
    <lineage>
        <taxon>Bacteria</taxon>
        <taxon>Bacillati</taxon>
        <taxon>Bacillota</taxon>
        <taxon>Bacilli</taxon>
        <taxon>Lactobacillales</taxon>
        <taxon>Streptococcaceae</taxon>
        <taxon>Streptococcus</taxon>
    </lineage>
</organism>
<accession>Q5M4T8</accession>
<gene>
    <name evidence="1" type="primary">coaA</name>
    <name type="ordered locus">stu0799</name>
</gene>
<keyword id="KW-0067">ATP-binding</keyword>
<keyword id="KW-0173">Coenzyme A biosynthesis</keyword>
<keyword id="KW-0963">Cytoplasm</keyword>
<keyword id="KW-0418">Kinase</keyword>
<keyword id="KW-0547">Nucleotide-binding</keyword>
<keyword id="KW-1185">Reference proteome</keyword>
<keyword id="KW-0808">Transferase</keyword>
<comment type="catalytic activity">
    <reaction evidence="1">
        <text>(R)-pantothenate + ATP = (R)-4'-phosphopantothenate + ADP + H(+)</text>
        <dbReference type="Rhea" id="RHEA:16373"/>
        <dbReference type="ChEBI" id="CHEBI:10986"/>
        <dbReference type="ChEBI" id="CHEBI:15378"/>
        <dbReference type="ChEBI" id="CHEBI:29032"/>
        <dbReference type="ChEBI" id="CHEBI:30616"/>
        <dbReference type="ChEBI" id="CHEBI:456216"/>
        <dbReference type="EC" id="2.7.1.33"/>
    </reaction>
</comment>
<comment type="pathway">
    <text evidence="1">Cofactor biosynthesis; coenzyme A biosynthesis; CoA from (R)-pantothenate: step 1/5.</text>
</comment>
<comment type="subcellular location">
    <subcellularLocation>
        <location evidence="1">Cytoplasm</location>
    </subcellularLocation>
</comment>
<comment type="similarity">
    <text evidence="1">Belongs to the prokaryotic pantothenate kinase family.</text>
</comment>
<evidence type="ECO:0000255" key="1">
    <source>
        <dbReference type="HAMAP-Rule" id="MF_00215"/>
    </source>
</evidence>
<dbReference type="EC" id="2.7.1.33" evidence="1"/>
<dbReference type="EMBL" id="CP000023">
    <property type="protein sequence ID" value="AAV60478.1"/>
    <property type="molecule type" value="Genomic_DNA"/>
</dbReference>
<dbReference type="RefSeq" id="WP_002947590.1">
    <property type="nucleotide sequence ID" value="NC_006448.1"/>
</dbReference>
<dbReference type="SMR" id="Q5M4T8"/>
<dbReference type="STRING" id="264199.stu0799"/>
<dbReference type="GeneID" id="66898693"/>
<dbReference type="KEGG" id="stl:stu0799"/>
<dbReference type="eggNOG" id="COG1072">
    <property type="taxonomic scope" value="Bacteria"/>
</dbReference>
<dbReference type="HOGENOM" id="CLU_053818_1_1_9"/>
<dbReference type="UniPathway" id="UPA00241">
    <property type="reaction ID" value="UER00352"/>
</dbReference>
<dbReference type="Proteomes" id="UP000001170">
    <property type="component" value="Chromosome"/>
</dbReference>
<dbReference type="GO" id="GO:0005737">
    <property type="term" value="C:cytoplasm"/>
    <property type="evidence" value="ECO:0007669"/>
    <property type="project" value="UniProtKB-SubCell"/>
</dbReference>
<dbReference type="GO" id="GO:0005524">
    <property type="term" value="F:ATP binding"/>
    <property type="evidence" value="ECO:0007669"/>
    <property type="project" value="UniProtKB-UniRule"/>
</dbReference>
<dbReference type="GO" id="GO:0004594">
    <property type="term" value="F:pantothenate kinase activity"/>
    <property type="evidence" value="ECO:0007669"/>
    <property type="project" value="UniProtKB-UniRule"/>
</dbReference>
<dbReference type="GO" id="GO:0015937">
    <property type="term" value="P:coenzyme A biosynthetic process"/>
    <property type="evidence" value="ECO:0007669"/>
    <property type="project" value="UniProtKB-UniRule"/>
</dbReference>
<dbReference type="CDD" id="cd02025">
    <property type="entry name" value="PanK"/>
    <property type="match status" value="1"/>
</dbReference>
<dbReference type="Gene3D" id="3.40.50.300">
    <property type="entry name" value="P-loop containing nucleotide triphosphate hydrolases"/>
    <property type="match status" value="1"/>
</dbReference>
<dbReference type="HAMAP" id="MF_00215">
    <property type="entry name" value="Pantothen_kinase_1"/>
    <property type="match status" value="1"/>
</dbReference>
<dbReference type="InterPro" id="IPR027417">
    <property type="entry name" value="P-loop_NTPase"/>
</dbReference>
<dbReference type="InterPro" id="IPR004566">
    <property type="entry name" value="PanK"/>
</dbReference>
<dbReference type="InterPro" id="IPR006083">
    <property type="entry name" value="PRK/URK"/>
</dbReference>
<dbReference type="NCBIfam" id="TIGR00554">
    <property type="entry name" value="panK_bact"/>
    <property type="match status" value="1"/>
</dbReference>
<dbReference type="PANTHER" id="PTHR10285">
    <property type="entry name" value="URIDINE KINASE"/>
    <property type="match status" value="1"/>
</dbReference>
<dbReference type="Pfam" id="PF00485">
    <property type="entry name" value="PRK"/>
    <property type="match status" value="1"/>
</dbReference>
<dbReference type="PIRSF" id="PIRSF000545">
    <property type="entry name" value="Pantothenate_kin"/>
    <property type="match status" value="1"/>
</dbReference>
<dbReference type="SUPFAM" id="SSF52540">
    <property type="entry name" value="P-loop containing nucleoside triphosphate hydrolases"/>
    <property type="match status" value="1"/>
</dbReference>
<proteinExistence type="inferred from homology"/>
<protein>
    <recommendedName>
        <fullName evidence="1">Pantothenate kinase</fullName>
        <ecNumber evidence="1">2.7.1.33</ecNumber>
    </recommendedName>
    <alternativeName>
        <fullName evidence="1">Pantothenic acid kinase</fullName>
    </alternativeName>
</protein>
<reference key="1">
    <citation type="journal article" date="2004" name="Nat. Biotechnol.">
        <title>Complete sequence and comparative genome analysis of the dairy bacterium Streptococcus thermophilus.</title>
        <authorList>
            <person name="Bolotin A."/>
            <person name="Quinquis B."/>
            <person name="Renault P."/>
            <person name="Sorokin A."/>
            <person name="Ehrlich S.D."/>
            <person name="Kulakauskas S."/>
            <person name="Lapidus A."/>
            <person name="Goltsman E."/>
            <person name="Mazur M."/>
            <person name="Pusch G.D."/>
            <person name="Fonstein M."/>
            <person name="Overbeek R."/>
            <person name="Kyprides N."/>
            <person name="Purnelle B."/>
            <person name="Prozzi D."/>
            <person name="Ngui K."/>
            <person name="Masuy D."/>
            <person name="Hancy F."/>
            <person name="Burteau S."/>
            <person name="Boutry M."/>
            <person name="Delcour J."/>
            <person name="Goffeau A."/>
            <person name="Hols P."/>
        </authorList>
    </citation>
    <scope>NUCLEOTIDE SEQUENCE [LARGE SCALE GENOMIC DNA]</scope>
    <source>
        <strain>ATCC BAA-250 / LMG 18311</strain>
    </source>
</reference>
<name>COAA_STRT2</name>
<sequence length="306" mass="35759">MLNEFINFETISRSDWQRFYQEDQVSLTPEELESIRSLNDKIDVQEVRDIYLPLINLIRIYHRAAEDLTFSKGIFLQKAQANRPFIIGISGSVAVGKSTTSRLLQLLLQRTFPKAKVDMVTTDGFLFPNQVLIDKGILNRKGFPESYDMPLLLNFLDTVKNGGDVNIPVYSHEIYDIVPGLTQKISQPNFLIVEGINVFQNPINQRLYMSDYFDFSIYIDADVKNIKTWYLERFQTLLELARKDENNYYHRFTKFTKEEALSLAQKTWKEINLVNLENYIEPTRNRAELILHKGDSHKIDLIHLKK</sequence>
<feature type="chain" id="PRO_1000043272" description="Pantothenate kinase">
    <location>
        <begin position="1"/>
        <end position="306"/>
    </location>
</feature>
<feature type="binding site" evidence="1">
    <location>
        <begin position="91"/>
        <end position="98"/>
    </location>
    <ligand>
        <name>ATP</name>
        <dbReference type="ChEBI" id="CHEBI:30616"/>
    </ligand>
</feature>